<comment type="function">
    <text evidence="3 4 7">Luciferase; part of the gene cluster that mediates the fungal bioluminescence cycle (PubMed:28508049, PubMed:30478037). Uses the fungal luciferin 3-hydroxyhispidin as a substrate to produce an endoperoxide as a high-energy intermediate with decomposition that yields oxyluciferin (also known as caffeoylpyruvate) and light emission (PubMed:28508049, PubMed:30478037). The fungal bioluminescence cycle begins with the hispidin synthetase that catalyzes the formation of hispidin which is further hydroxylated by the hispidin-3-hydroxylase, yielding the fungal luciferin 3-hydroxyhispidin. The luciferase then produces an endoperoxide as a high-energy intermediate with decomposition that yields oxyluciferin and light emission. Oxyluciferin can be recycled to caffeic acid by caffeoylpyruvate hydrolase (Probable) (PubMed:30478037).</text>
</comment>
<comment type="catalytic activity">
    <reaction evidence="3">
        <text>3-hydroxyhispidin + O2 = (E)-caffeoylpyruvate + hnu + CO2</text>
        <dbReference type="Rhea" id="RHEA:71143"/>
        <dbReference type="ChEBI" id="CHEBI:15379"/>
        <dbReference type="ChEBI" id="CHEBI:16526"/>
        <dbReference type="ChEBI" id="CHEBI:30212"/>
        <dbReference type="ChEBI" id="CHEBI:190289"/>
        <dbReference type="ChEBI" id="CHEBI:190290"/>
    </reaction>
    <physiologicalReaction direction="left-to-right" evidence="3">
        <dbReference type="Rhea" id="RHEA:71144"/>
    </physiologicalReaction>
</comment>
<comment type="catalytic activity">
    <reaction evidence="3">
        <text>3-hydroxyhispidin + O2 = 4-[(E)-2-(3,4-dihydroxyphenyl)ethenyl]-1,7-dihydroxy-2,3,5-trioxabicyclo[2.2.2]oct-7-en-6-one</text>
        <dbReference type="Rhea" id="RHEA:71147"/>
        <dbReference type="ChEBI" id="CHEBI:15379"/>
        <dbReference type="ChEBI" id="CHEBI:190289"/>
        <dbReference type="ChEBI" id="CHEBI:190291"/>
    </reaction>
    <physiologicalReaction direction="left-to-right" evidence="3">
        <dbReference type="Rhea" id="RHEA:71148"/>
    </physiologicalReaction>
</comment>
<comment type="biophysicochemical properties">
    <phDependence>
        <text evidence="4">Optimum pH is 8.0.</text>
    </phDependence>
    <temperatureDependence>
        <text evidence="4">Optimum temperature is 10 to 18 degrees Celsius.</text>
    </temperatureDependence>
</comment>
<comment type="subcellular location">
    <subcellularLocation>
        <location evidence="4">Membrane</location>
        <topology evidence="1">Single-pass membrane protein</topology>
    </subcellularLocation>
</comment>
<comment type="biotechnology">
    <text evidence="4">The availability of a complete eukaryotic luciferin biosynthesis pathway provides several applications in biomedicine and bioengineering.</text>
</comment>
<comment type="similarity">
    <text evidence="6">Belongs to the fungal luciferase family.</text>
</comment>
<keyword id="KW-0325">Glycoprotein</keyword>
<keyword id="KW-0472">Membrane</keyword>
<keyword id="KW-0560">Oxidoreductase</keyword>
<keyword id="KW-0812">Transmembrane</keyword>
<keyword id="KW-1133">Transmembrane helix</keyword>
<proteinExistence type="evidence at protein level"/>
<reference key="1">
    <citation type="journal article" date="2018" name="Proc. Natl. Acad. Sci. U.S.A.">
        <title>Genetically encodable bioluminescent system from fungi.</title>
        <authorList>
            <person name="Kotlobay A.A."/>
            <person name="Sarkisyan K.S."/>
            <person name="Mokrushina Y.A."/>
            <person name="Marcet-Houben M."/>
            <person name="Serebrovskaya E.O."/>
            <person name="Markina N.M."/>
            <person name="Gonzalez Somermeyer L."/>
            <person name="Gorokhovatsky A.Y."/>
            <person name="Vvedensky A."/>
            <person name="Purtov K.V."/>
            <person name="Petushkov V.N."/>
            <person name="Rodionova N.S."/>
            <person name="Chepurnyh T.V."/>
            <person name="Fakhranurova L.I."/>
            <person name="Guglya E.B."/>
            <person name="Ziganshin R."/>
            <person name="Tsarkova A.S."/>
            <person name="Kaskova Z.M."/>
            <person name="Shender V."/>
            <person name="Abakumov M."/>
            <person name="Abakumova T.O."/>
            <person name="Povolotskaya I.S."/>
            <person name="Eroshkin F.M."/>
            <person name="Zaraisky A.G."/>
            <person name="Mishin A.S."/>
            <person name="Dolgov S.V."/>
            <person name="Mitiouchkina T.Y."/>
            <person name="Kopantzev E.P."/>
            <person name="Waldenmaier H.E."/>
            <person name="Oliveira A.G."/>
            <person name="Oba Y."/>
            <person name="Barsova E."/>
            <person name="Bogdanova E.A."/>
            <person name="Gabaldon T."/>
            <person name="Stevani C.V."/>
            <person name="Lukyanov S."/>
            <person name="Smirnov I.V."/>
            <person name="Gitelson J.I."/>
            <person name="Kondrashov F.A."/>
            <person name="Yampolsky I.V."/>
        </authorList>
    </citation>
    <scope>NUCLEOTIDE SEQUENCE [MRNA]</scope>
    <scope>IDENTIFICATION</scope>
    <scope>FUNCTION</scope>
    <scope>CATALYTIC ACTIVITY</scope>
    <scope>BIOPHYSICOCHEMICAL PROPERTIES</scope>
    <scope>SUBCELLULAR LOCATION</scope>
    <scope>PATHWAY</scope>
    <scope>BIOTECHNOLOGY</scope>
</reference>
<reference key="2">
    <citation type="journal article" date="2017" name="Sci. Adv.">
        <title>Mechanism and color modulation of fungal bioluminescence.</title>
        <authorList>
            <person name="Kaskova Z.M."/>
            <person name="Doerr F.A."/>
            <person name="Petushkov V.N."/>
            <person name="Purtov K.V."/>
            <person name="Tsarkova A.S."/>
            <person name="Rodionova N.S."/>
            <person name="Mineev K.S."/>
            <person name="Guglya E.B."/>
            <person name="Kotlobay A."/>
            <person name="Baleeva N.S."/>
            <person name="Baranov M.S."/>
            <person name="Arseniev A.S."/>
            <person name="Gitelson J.I."/>
            <person name="Lukyanov S."/>
            <person name="Suzuki Y."/>
            <person name="Kanie S."/>
            <person name="Pinto E."/>
            <person name="Di Mascio P."/>
            <person name="Waldenmaier H.E."/>
            <person name="Pereira T.A."/>
            <person name="Carvalho R.P."/>
            <person name="Oliveira A.G."/>
            <person name="Oba Y."/>
            <person name="Bastos E.L."/>
            <person name="Stevani C.V."/>
            <person name="Yampolsky I.V."/>
        </authorList>
    </citation>
    <scope>FUNCTION</scope>
    <scope>CATALYTIC ACTIVITY</scope>
</reference>
<protein>
    <recommendedName>
        <fullName evidence="5">Luciferase</fullName>
        <ecNumber evidence="3 4">1.-.-.-</ecNumber>
    </recommendedName>
    <alternativeName>
        <fullName evidence="5">Fungal bioluminescence cycle protein luz</fullName>
    </alternativeName>
</protein>
<sequence>MRINISLSSLFERLSKLSSRSIAITCGVVLASAIAFPIIRRDYQTFLEVGPSYAPQNFRGYIIVCVLSLFRQEQKGLAIYDRLPEKRRWLADLPFREGTRPSITSHIIQRQRTQLVDQEFATRELIDKVIPRVQARHTDKTFLSTSKFEFHAKAIFLLPSIPINDPLNIPSHDTVRRTKREIAHMHDYHDCTLHLALAAQDGKEVLKKGWGQRHPLAGPGVPGPPTEWTFLYAPRNEEEARVVEMIVEASIGYMTNDPAGKIVENAK</sequence>
<name>LUZ_NEONM</name>
<evidence type="ECO:0000255" key="1"/>
<evidence type="ECO:0000255" key="2">
    <source>
        <dbReference type="PROSITE-ProRule" id="PRU00498"/>
    </source>
</evidence>
<evidence type="ECO:0000269" key="3">
    <source>
    </source>
</evidence>
<evidence type="ECO:0000269" key="4">
    <source>
    </source>
</evidence>
<evidence type="ECO:0000303" key="5">
    <source>
    </source>
</evidence>
<evidence type="ECO:0000305" key="6"/>
<evidence type="ECO:0000305" key="7">
    <source>
    </source>
</evidence>
<gene>
    <name evidence="5" type="primary">luz</name>
</gene>
<feature type="chain" id="PRO_0000455710" description="Luciferase">
    <location>
        <begin position="1"/>
        <end position="267"/>
    </location>
</feature>
<feature type="transmembrane region" description="Helical" evidence="1">
    <location>
        <begin position="17"/>
        <end position="39"/>
    </location>
</feature>
<feature type="glycosylation site" description="N-linked (GlcNAc...) asparagine" evidence="2">
    <location>
        <position position="4"/>
    </location>
</feature>
<dbReference type="EC" id="1.-.-.-" evidence="3 4"/>
<dbReference type="EMBL" id="LC435379">
    <property type="protein sequence ID" value="BBH43509.1"/>
    <property type="molecule type" value="mRNA"/>
</dbReference>
<dbReference type="GlyCosmos" id="A0A3G9JYH7">
    <property type="glycosylation" value="1 site, No reported glycans"/>
</dbReference>
<dbReference type="GO" id="GO:0016020">
    <property type="term" value="C:membrane"/>
    <property type="evidence" value="ECO:0007669"/>
    <property type="project" value="UniProtKB-SubCell"/>
</dbReference>
<dbReference type="GO" id="GO:0016491">
    <property type="term" value="F:oxidoreductase activity"/>
    <property type="evidence" value="ECO:0007669"/>
    <property type="project" value="UniProtKB-KW"/>
</dbReference>
<dbReference type="InterPro" id="IPR048273">
    <property type="entry name" value="Luciferase"/>
</dbReference>
<dbReference type="InterPro" id="IPR040841">
    <property type="entry name" value="Luciferase_dom"/>
</dbReference>
<dbReference type="PANTHER" id="PTHR38695">
    <property type="entry name" value="AMINO ACID PERMEASE_ SLC12A DOMAIN-CONTAINING PROTEIN"/>
    <property type="match status" value="1"/>
</dbReference>
<dbReference type="PANTHER" id="PTHR38695:SF1">
    <property type="entry name" value="AMINO ACID PERMEASE_ SLC12A DOMAIN-CONTAINING PROTEIN"/>
    <property type="match status" value="1"/>
</dbReference>
<dbReference type="Pfam" id="PF17648">
    <property type="entry name" value="Luciferase"/>
    <property type="match status" value="1"/>
</dbReference>
<organism>
    <name type="scientific">Neonothopanus nambi</name>
    <name type="common">Agaricus nambi</name>
    <dbReference type="NCBI Taxonomy" id="71958"/>
    <lineage>
        <taxon>Eukaryota</taxon>
        <taxon>Fungi</taxon>
        <taxon>Dikarya</taxon>
        <taxon>Basidiomycota</taxon>
        <taxon>Agaricomycotina</taxon>
        <taxon>Agaricomycetes</taxon>
        <taxon>Agaricomycetidae</taxon>
        <taxon>Agaricales</taxon>
        <taxon>Marasmiineae</taxon>
        <taxon>Omphalotaceae</taxon>
        <taxon>Neonothopanus</taxon>
    </lineage>
</organism>
<accession>A0A3G9JYH7</accession>